<proteinExistence type="evidence at protein level"/>
<protein>
    <recommendedName>
        <fullName>P3 protein</fullName>
    </recommendedName>
    <alternativeName>
        <fullName>Solute carrier family 10 member 3</fullName>
    </alternativeName>
</protein>
<feature type="chain" id="PRO_0000052343" description="P3 protein">
    <location>
        <begin position="1"/>
        <end position="477"/>
    </location>
</feature>
<feature type="transmembrane region" description="Helical" evidence="1">
    <location>
        <begin position="225"/>
        <end position="245"/>
    </location>
</feature>
<feature type="transmembrane region" description="Helical" evidence="1">
    <location>
        <begin position="253"/>
        <end position="273"/>
    </location>
</feature>
<feature type="transmembrane region" description="Helical" evidence="1">
    <location>
        <begin position="281"/>
        <end position="301"/>
    </location>
</feature>
<feature type="transmembrane region" description="Helical" evidence="1">
    <location>
        <begin position="320"/>
        <end position="340"/>
    </location>
</feature>
<feature type="transmembrane region" description="Helical" evidence="1">
    <location>
        <begin position="361"/>
        <end position="381"/>
    </location>
</feature>
<feature type="transmembrane region" description="Helical" evidence="1">
    <location>
        <begin position="383"/>
        <end position="403"/>
    </location>
</feature>
<feature type="transmembrane region" description="Helical" evidence="1">
    <location>
        <begin position="417"/>
        <end position="437"/>
    </location>
</feature>
<feature type="transmembrane region" description="Helical" evidence="1">
    <location>
        <begin position="450"/>
        <end position="470"/>
    </location>
</feature>
<feature type="region of interest" description="Disordered" evidence="2">
    <location>
        <begin position="1"/>
        <end position="21"/>
    </location>
</feature>
<feature type="splice variant" id="VSP_043669" description="In isoform 2." evidence="3">
    <location>
        <begin position="120"/>
        <end position="148"/>
    </location>
</feature>
<feature type="sequence variant" id="VAR_050229" description="In dbSNP:rs35381503.">
    <original>V</original>
    <variation>I</variation>
    <location>
        <position position="354"/>
    </location>
</feature>
<comment type="function">
    <text>The ubiquitous expression and the conservation of the sequence in distant animal species suggest that the gene codes for a protein with housekeeping functions.</text>
</comment>
<comment type="subcellular location">
    <subcellularLocation>
        <location evidence="4">Membrane</location>
        <topology evidence="4">Multi-pass membrane protein</topology>
    </subcellularLocation>
</comment>
<comment type="alternative products">
    <event type="alternative splicing"/>
    <isoform>
        <id>P09131-1</id>
        <name>1</name>
        <sequence type="displayed"/>
    </isoform>
    <isoform>
        <id>P09131-2</id>
        <name>2</name>
        <sequence type="described" ref="VSP_043669"/>
    </isoform>
</comment>
<comment type="similarity">
    <text evidence="4">Belongs to the bile acid:sodium symporter (BASS) (TC 2.A.28) family.</text>
</comment>
<gene>
    <name type="primary">SLC10A3</name>
    <name type="synonym">DXS253E</name>
    <name type="synonym">P3</name>
</gene>
<evidence type="ECO:0000255" key="1"/>
<evidence type="ECO:0000256" key="2">
    <source>
        <dbReference type="SAM" id="MobiDB-lite"/>
    </source>
</evidence>
<evidence type="ECO:0000303" key="3">
    <source>
    </source>
</evidence>
<evidence type="ECO:0000305" key="4"/>
<keyword id="KW-0025">Alternative splicing</keyword>
<keyword id="KW-0472">Membrane</keyword>
<keyword id="KW-1267">Proteomics identification</keyword>
<keyword id="KW-1185">Reference proteome</keyword>
<keyword id="KW-0769">Symport</keyword>
<keyword id="KW-0812">Transmembrane</keyword>
<keyword id="KW-1133">Transmembrane helix</keyword>
<keyword id="KW-0813">Transport</keyword>
<reference key="1">
    <citation type="journal article" date="1988" name="Nucleic Acids Res.">
        <title>CpG islands of the X chromosome are gene associated.</title>
        <authorList>
            <person name="Alcalay M."/>
            <person name="Toniolo D."/>
        </authorList>
    </citation>
    <scope>NUCLEOTIDE SEQUENCE [GENOMIC DNA]</scope>
</reference>
<reference key="2">
    <citation type="journal article" date="1996" name="Hum. Mol. Genet.">
        <title>Long-range sequence analysis in Xq28: thirteen known and six candidate genes in 219.4 kb of high GC DNA between the RCP/GCP and G6PD loci.</title>
        <authorList>
            <person name="Chen E.Y."/>
            <person name="Zollo M."/>
            <person name="Mazzarella R.A."/>
            <person name="Ciccodicola A."/>
            <person name="Chen C.-N."/>
            <person name="Zuo L."/>
            <person name="Heiner C."/>
            <person name="Burough F.W."/>
            <person name="Ripetto M."/>
            <person name="Schlessinger D."/>
            <person name="D'Urso M."/>
        </authorList>
    </citation>
    <scope>NUCLEOTIDE SEQUENCE [GENOMIC DNA]</scope>
</reference>
<reference key="3">
    <citation type="journal article" date="2005" name="Nature">
        <title>The DNA sequence of the human X chromosome.</title>
        <authorList>
            <person name="Ross M.T."/>
            <person name="Grafham D.V."/>
            <person name="Coffey A.J."/>
            <person name="Scherer S."/>
            <person name="McLay K."/>
            <person name="Muzny D."/>
            <person name="Platzer M."/>
            <person name="Howell G.R."/>
            <person name="Burrows C."/>
            <person name="Bird C.P."/>
            <person name="Frankish A."/>
            <person name="Lovell F.L."/>
            <person name="Howe K.L."/>
            <person name="Ashurst J.L."/>
            <person name="Fulton R.S."/>
            <person name="Sudbrak R."/>
            <person name="Wen G."/>
            <person name="Jones M.C."/>
            <person name="Hurles M.E."/>
            <person name="Andrews T.D."/>
            <person name="Scott C.E."/>
            <person name="Searle S."/>
            <person name="Ramser J."/>
            <person name="Whittaker A."/>
            <person name="Deadman R."/>
            <person name="Carter N.P."/>
            <person name="Hunt S.E."/>
            <person name="Chen R."/>
            <person name="Cree A."/>
            <person name="Gunaratne P."/>
            <person name="Havlak P."/>
            <person name="Hodgson A."/>
            <person name="Metzker M.L."/>
            <person name="Richards S."/>
            <person name="Scott G."/>
            <person name="Steffen D."/>
            <person name="Sodergren E."/>
            <person name="Wheeler D.A."/>
            <person name="Worley K.C."/>
            <person name="Ainscough R."/>
            <person name="Ambrose K.D."/>
            <person name="Ansari-Lari M.A."/>
            <person name="Aradhya S."/>
            <person name="Ashwell R.I."/>
            <person name="Babbage A.K."/>
            <person name="Bagguley C.L."/>
            <person name="Ballabio A."/>
            <person name="Banerjee R."/>
            <person name="Barker G.E."/>
            <person name="Barlow K.F."/>
            <person name="Barrett I.P."/>
            <person name="Bates K.N."/>
            <person name="Beare D.M."/>
            <person name="Beasley H."/>
            <person name="Beasley O."/>
            <person name="Beck A."/>
            <person name="Bethel G."/>
            <person name="Blechschmidt K."/>
            <person name="Brady N."/>
            <person name="Bray-Allen S."/>
            <person name="Bridgeman A.M."/>
            <person name="Brown A.J."/>
            <person name="Brown M.J."/>
            <person name="Bonnin D."/>
            <person name="Bruford E.A."/>
            <person name="Buhay C."/>
            <person name="Burch P."/>
            <person name="Burford D."/>
            <person name="Burgess J."/>
            <person name="Burrill W."/>
            <person name="Burton J."/>
            <person name="Bye J.M."/>
            <person name="Carder C."/>
            <person name="Carrel L."/>
            <person name="Chako J."/>
            <person name="Chapman J.C."/>
            <person name="Chavez D."/>
            <person name="Chen E."/>
            <person name="Chen G."/>
            <person name="Chen Y."/>
            <person name="Chen Z."/>
            <person name="Chinault C."/>
            <person name="Ciccodicola A."/>
            <person name="Clark S.Y."/>
            <person name="Clarke G."/>
            <person name="Clee C.M."/>
            <person name="Clegg S."/>
            <person name="Clerc-Blankenburg K."/>
            <person name="Clifford K."/>
            <person name="Cobley V."/>
            <person name="Cole C.G."/>
            <person name="Conquer J.S."/>
            <person name="Corby N."/>
            <person name="Connor R.E."/>
            <person name="David R."/>
            <person name="Davies J."/>
            <person name="Davis C."/>
            <person name="Davis J."/>
            <person name="Delgado O."/>
            <person name="Deshazo D."/>
            <person name="Dhami P."/>
            <person name="Ding Y."/>
            <person name="Dinh H."/>
            <person name="Dodsworth S."/>
            <person name="Draper H."/>
            <person name="Dugan-Rocha S."/>
            <person name="Dunham A."/>
            <person name="Dunn M."/>
            <person name="Durbin K.J."/>
            <person name="Dutta I."/>
            <person name="Eades T."/>
            <person name="Ellwood M."/>
            <person name="Emery-Cohen A."/>
            <person name="Errington H."/>
            <person name="Evans K.L."/>
            <person name="Faulkner L."/>
            <person name="Francis F."/>
            <person name="Frankland J."/>
            <person name="Fraser A.E."/>
            <person name="Galgoczy P."/>
            <person name="Gilbert J."/>
            <person name="Gill R."/>
            <person name="Gloeckner G."/>
            <person name="Gregory S.G."/>
            <person name="Gribble S."/>
            <person name="Griffiths C."/>
            <person name="Grocock R."/>
            <person name="Gu Y."/>
            <person name="Gwilliam R."/>
            <person name="Hamilton C."/>
            <person name="Hart E.A."/>
            <person name="Hawes A."/>
            <person name="Heath P.D."/>
            <person name="Heitmann K."/>
            <person name="Hennig S."/>
            <person name="Hernandez J."/>
            <person name="Hinzmann B."/>
            <person name="Ho S."/>
            <person name="Hoffs M."/>
            <person name="Howden P.J."/>
            <person name="Huckle E.J."/>
            <person name="Hume J."/>
            <person name="Hunt P.J."/>
            <person name="Hunt A.R."/>
            <person name="Isherwood J."/>
            <person name="Jacob L."/>
            <person name="Johnson D."/>
            <person name="Jones S."/>
            <person name="de Jong P.J."/>
            <person name="Joseph S.S."/>
            <person name="Keenan S."/>
            <person name="Kelly S."/>
            <person name="Kershaw J.K."/>
            <person name="Khan Z."/>
            <person name="Kioschis P."/>
            <person name="Klages S."/>
            <person name="Knights A.J."/>
            <person name="Kosiura A."/>
            <person name="Kovar-Smith C."/>
            <person name="Laird G.K."/>
            <person name="Langford C."/>
            <person name="Lawlor S."/>
            <person name="Leversha M."/>
            <person name="Lewis L."/>
            <person name="Liu W."/>
            <person name="Lloyd C."/>
            <person name="Lloyd D.M."/>
            <person name="Loulseged H."/>
            <person name="Loveland J.E."/>
            <person name="Lovell J.D."/>
            <person name="Lozado R."/>
            <person name="Lu J."/>
            <person name="Lyne R."/>
            <person name="Ma J."/>
            <person name="Maheshwari M."/>
            <person name="Matthews L.H."/>
            <person name="McDowall J."/>
            <person name="McLaren S."/>
            <person name="McMurray A."/>
            <person name="Meidl P."/>
            <person name="Meitinger T."/>
            <person name="Milne S."/>
            <person name="Miner G."/>
            <person name="Mistry S.L."/>
            <person name="Morgan M."/>
            <person name="Morris S."/>
            <person name="Mueller I."/>
            <person name="Mullikin J.C."/>
            <person name="Nguyen N."/>
            <person name="Nordsiek G."/>
            <person name="Nyakatura G."/>
            <person name="O'dell C.N."/>
            <person name="Okwuonu G."/>
            <person name="Palmer S."/>
            <person name="Pandian R."/>
            <person name="Parker D."/>
            <person name="Parrish J."/>
            <person name="Pasternak S."/>
            <person name="Patel D."/>
            <person name="Pearce A.V."/>
            <person name="Pearson D.M."/>
            <person name="Pelan S.E."/>
            <person name="Perez L."/>
            <person name="Porter K.M."/>
            <person name="Ramsey Y."/>
            <person name="Reichwald K."/>
            <person name="Rhodes S."/>
            <person name="Ridler K.A."/>
            <person name="Schlessinger D."/>
            <person name="Schueler M.G."/>
            <person name="Sehra H.K."/>
            <person name="Shaw-Smith C."/>
            <person name="Shen H."/>
            <person name="Sheridan E.M."/>
            <person name="Shownkeen R."/>
            <person name="Skuce C.D."/>
            <person name="Smith M.L."/>
            <person name="Sotheran E.C."/>
            <person name="Steingruber H.E."/>
            <person name="Steward C.A."/>
            <person name="Storey R."/>
            <person name="Swann R.M."/>
            <person name="Swarbreck D."/>
            <person name="Tabor P.E."/>
            <person name="Taudien S."/>
            <person name="Taylor T."/>
            <person name="Teague B."/>
            <person name="Thomas K."/>
            <person name="Thorpe A."/>
            <person name="Timms K."/>
            <person name="Tracey A."/>
            <person name="Trevanion S."/>
            <person name="Tromans A.C."/>
            <person name="d'Urso M."/>
            <person name="Verduzco D."/>
            <person name="Villasana D."/>
            <person name="Waldron L."/>
            <person name="Wall M."/>
            <person name="Wang Q."/>
            <person name="Warren J."/>
            <person name="Warry G.L."/>
            <person name="Wei X."/>
            <person name="West A."/>
            <person name="Whitehead S.L."/>
            <person name="Whiteley M.N."/>
            <person name="Wilkinson J.E."/>
            <person name="Willey D.L."/>
            <person name="Williams G."/>
            <person name="Williams L."/>
            <person name="Williamson A."/>
            <person name="Williamson H."/>
            <person name="Wilming L."/>
            <person name="Woodmansey R.L."/>
            <person name="Wray P.W."/>
            <person name="Yen J."/>
            <person name="Zhang J."/>
            <person name="Zhou J."/>
            <person name="Zoghbi H."/>
            <person name="Zorilla S."/>
            <person name="Buck D."/>
            <person name="Reinhardt R."/>
            <person name="Poustka A."/>
            <person name="Rosenthal A."/>
            <person name="Lehrach H."/>
            <person name="Meindl A."/>
            <person name="Minx P.J."/>
            <person name="Hillier L.W."/>
            <person name="Willard H.F."/>
            <person name="Wilson R.K."/>
            <person name="Waterston R.H."/>
            <person name="Rice C.M."/>
            <person name="Vaudin M."/>
            <person name="Coulson A."/>
            <person name="Nelson D.L."/>
            <person name="Weinstock G."/>
            <person name="Sulston J.E."/>
            <person name="Durbin R.M."/>
            <person name="Hubbard T."/>
            <person name="Gibbs R.A."/>
            <person name="Beck S."/>
            <person name="Rogers J."/>
            <person name="Bentley D.R."/>
        </authorList>
    </citation>
    <scope>NUCLEOTIDE SEQUENCE [LARGE SCALE GENOMIC DNA]</scope>
</reference>
<reference key="4">
    <citation type="submission" date="2005-09" db="EMBL/GenBank/DDBJ databases">
        <authorList>
            <person name="Mural R.J."/>
            <person name="Istrail S."/>
            <person name="Sutton G.G."/>
            <person name="Florea L."/>
            <person name="Halpern A.L."/>
            <person name="Mobarry C.M."/>
            <person name="Lippert R."/>
            <person name="Walenz B."/>
            <person name="Shatkay H."/>
            <person name="Dew I."/>
            <person name="Miller J.R."/>
            <person name="Flanigan M.J."/>
            <person name="Edwards N.J."/>
            <person name="Bolanos R."/>
            <person name="Fasulo D."/>
            <person name="Halldorsson B.V."/>
            <person name="Hannenhalli S."/>
            <person name="Turner R."/>
            <person name="Yooseph S."/>
            <person name="Lu F."/>
            <person name="Nusskern D.R."/>
            <person name="Shue B.C."/>
            <person name="Zheng X.H."/>
            <person name="Zhong F."/>
            <person name="Delcher A.L."/>
            <person name="Huson D.H."/>
            <person name="Kravitz S.A."/>
            <person name="Mouchard L."/>
            <person name="Reinert K."/>
            <person name="Remington K.A."/>
            <person name="Clark A.G."/>
            <person name="Waterman M.S."/>
            <person name="Eichler E.E."/>
            <person name="Adams M.D."/>
            <person name="Hunkapiller M.W."/>
            <person name="Myers E.W."/>
            <person name="Venter J.C."/>
        </authorList>
    </citation>
    <scope>NUCLEOTIDE SEQUENCE [LARGE SCALE GENOMIC DNA]</scope>
</reference>
<reference key="5">
    <citation type="journal article" date="2004" name="Genome Res.">
        <title>The status, quality, and expansion of the NIH full-length cDNA project: the Mammalian Gene Collection (MGC).</title>
        <authorList>
            <consortium name="The MGC Project Team"/>
        </authorList>
    </citation>
    <scope>NUCLEOTIDE SEQUENCE [LARGE SCALE MRNA] (ISOFORM 2)</scope>
    <source>
        <tissue>Brain</tissue>
    </source>
</reference>
<accession>P09131</accession>
<accession>Q5HY79</accession>
<accession>Q9BSL2</accession>
<organism>
    <name type="scientific">Homo sapiens</name>
    <name type="common">Human</name>
    <dbReference type="NCBI Taxonomy" id="9606"/>
    <lineage>
        <taxon>Eukaryota</taxon>
        <taxon>Metazoa</taxon>
        <taxon>Chordata</taxon>
        <taxon>Craniata</taxon>
        <taxon>Vertebrata</taxon>
        <taxon>Euteleostomi</taxon>
        <taxon>Mammalia</taxon>
        <taxon>Eutheria</taxon>
        <taxon>Euarchontoglires</taxon>
        <taxon>Primates</taxon>
        <taxon>Haplorrhini</taxon>
        <taxon>Catarrhini</taxon>
        <taxon>Hominidae</taxon>
        <taxon>Homo</taxon>
    </lineage>
</organism>
<dbReference type="EMBL" id="X12458">
    <property type="protein sequence ID" value="CAA30998.1"/>
    <property type="molecule type" value="Genomic_DNA"/>
</dbReference>
<dbReference type="EMBL" id="L44140">
    <property type="protein sequence ID" value="AAA92651.1"/>
    <property type="molecule type" value="Genomic_DNA"/>
</dbReference>
<dbReference type="EMBL" id="BX664739">
    <property type="status" value="NOT_ANNOTATED_CDS"/>
    <property type="molecule type" value="Genomic_DNA"/>
</dbReference>
<dbReference type="EMBL" id="CH471172">
    <property type="protein sequence ID" value="EAW72697.1"/>
    <property type="molecule type" value="Genomic_DNA"/>
</dbReference>
<dbReference type="EMBL" id="CH471172">
    <property type="protein sequence ID" value="EAW72698.1"/>
    <property type="molecule type" value="Genomic_DNA"/>
</dbReference>
<dbReference type="EMBL" id="CH471172">
    <property type="protein sequence ID" value="EAW72699.1"/>
    <property type="molecule type" value="Genomic_DNA"/>
</dbReference>
<dbReference type="EMBL" id="BC004966">
    <property type="protein sequence ID" value="AAH04966.1"/>
    <property type="molecule type" value="mRNA"/>
</dbReference>
<dbReference type="CCDS" id="CCDS14755.1">
    <molecule id="P09131-1"/>
</dbReference>
<dbReference type="CCDS" id="CCDS48195.1">
    <molecule id="P09131-2"/>
</dbReference>
<dbReference type="PIR" id="S01696">
    <property type="entry name" value="S01696"/>
</dbReference>
<dbReference type="RefSeq" id="NP_001135863.1">
    <molecule id="P09131-2"/>
    <property type="nucleotide sequence ID" value="NM_001142391.3"/>
</dbReference>
<dbReference type="RefSeq" id="NP_001135864.1">
    <molecule id="P09131-1"/>
    <property type="nucleotide sequence ID" value="NM_001142392.3"/>
</dbReference>
<dbReference type="RefSeq" id="NP_062822.1">
    <molecule id="P09131-1"/>
    <property type="nucleotide sequence ID" value="NM_019848.5"/>
</dbReference>
<dbReference type="RefSeq" id="XP_011529503.1">
    <molecule id="P09131-1"/>
    <property type="nucleotide sequence ID" value="XM_011531201.3"/>
</dbReference>
<dbReference type="RefSeq" id="XP_054183925.1">
    <molecule id="P09131-1"/>
    <property type="nucleotide sequence ID" value="XM_054327950.1"/>
</dbReference>
<dbReference type="SMR" id="P09131"/>
<dbReference type="BioGRID" id="113889">
    <property type="interactions" value="11"/>
</dbReference>
<dbReference type="FunCoup" id="P09131">
    <property type="interactions" value="6"/>
</dbReference>
<dbReference type="IntAct" id="P09131">
    <property type="interactions" value="1"/>
</dbReference>
<dbReference type="STRING" id="9606.ENSP00000263512"/>
<dbReference type="TCDB" id="2.A.28.1.8">
    <property type="family name" value="the bile acid:na(+) symporter (bass) family"/>
</dbReference>
<dbReference type="GlyGen" id="P09131">
    <property type="glycosylation" value="1 site"/>
</dbReference>
<dbReference type="iPTMnet" id="P09131"/>
<dbReference type="PhosphoSitePlus" id="P09131"/>
<dbReference type="SwissPalm" id="P09131"/>
<dbReference type="BioMuta" id="SLC10A3"/>
<dbReference type="DMDM" id="129356"/>
<dbReference type="MassIVE" id="P09131"/>
<dbReference type="PaxDb" id="9606-ENSP00000263512"/>
<dbReference type="PeptideAtlas" id="P09131"/>
<dbReference type="ProteomicsDB" id="52201">
    <molecule id="P09131-1"/>
</dbReference>
<dbReference type="ProteomicsDB" id="52202">
    <molecule id="P09131-2"/>
</dbReference>
<dbReference type="Antibodypedia" id="17715">
    <property type="antibodies" value="61 antibodies from 16 providers"/>
</dbReference>
<dbReference type="DNASU" id="8273"/>
<dbReference type="Ensembl" id="ENST00000263512.5">
    <molecule id="P09131-1"/>
    <property type="protein sequence ID" value="ENSP00000263512.4"/>
    <property type="gene ID" value="ENSG00000126903.16"/>
</dbReference>
<dbReference type="Ensembl" id="ENST00000369649.8">
    <molecule id="P09131-2"/>
    <property type="protein sequence ID" value="ENSP00000358663.4"/>
    <property type="gene ID" value="ENSG00000126903.16"/>
</dbReference>
<dbReference type="Ensembl" id="ENST00000393587.4">
    <molecule id="P09131-1"/>
    <property type="protein sequence ID" value="ENSP00000377212.4"/>
    <property type="gene ID" value="ENSG00000126903.16"/>
</dbReference>
<dbReference type="Ensembl" id="ENST00000651600.1">
    <molecule id="P09131-1"/>
    <property type="protein sequence ID" value="ENSP00000499188.1"/>
    <property type="gene ID" value="ENSG00000126903.16"/>
</dbReference>
<dbReference type="GeneID" id="8273"/>
<dbReference type="KEGG" id="hsa:8273"/>
<dbReference type="MANE-Select" id="ENST00000651600.1">
    <property type="protein sequence ID" value="ENSP00000499188.1"/>
    <property type="RefSeq nucleotide sequence ID" value="NM_019848.5"/>
    <property type="RefSeq protein sequence ID" value="NP_062822.1"/>
</dbReference>
<dbReference type="UCSC" id="uc004flp.4">
    <molecule id="P09131-1"/>
    <property type="organism name" value="human"/>
</dbReference>
<dbReference type="AGR" id="HGNC:22979"/>
<dbReference type="CTD" id="8273"/>
<dbReference type="DisGeNET" id="8273"/>
<dbReference type="GeneCards" id="SLC10A3"/>
<dbReference type="HGNC" id="HGNC:22979">
    <property type="gene designation" value="SLC10A3"/>
</dbReference>
<dbReference type="HPA" id="ENSG00000126903">
    <property type="expression patterns" value="Low tissue specificity"/>
</dbReference>
<dbReference type="MIM" id="312090">
    <property type="type" value="gene"/>
</dbReference>
<dbReference type="neXtProt" id="NX_P09131"/>
<dbReference type="OpenTargets" id="ENSG00000126903"/>
<dbReference type="PharmGKB" id="PA134886398"/>
<dbReference type="VEuPathDB" id="HostDB:ENSG00000126903"/>
<dbReference type="eggNOG" id="KOG2718">
    <property type="taxonomic scope" value="Eukaryota"/>
</dbReference>
<dbReference type="GeneTree" id="ENSGT00950000182808"/>
<dbReference type="HOGENOM" id="CLU_034788_2_0_1"/>
<dbReference type="InParanoid" id="P09131"/>
<dbReference type="OMA" id="IQLMDPH"/>
<dbReference type="OrthoDB" id="203097at2759"/>
<dbReference type="PAN-GO" id="P09131">
    <property type="GO annotations" value="2 GO annotations based on evolutionary models"/>
</dbReference>
<dbReference type="PhylomeDB" id="P09131"/>
<dbReference type="TreeFam" id="TF315811"/>
<dbReference type="PathwayCommons" id="P09131"/>
<dbReference type="SignaLink" id="P09131"/>
<dbReference type="BioGRID-ORCS" id="8273">
    <property type="hits" value="9 hits in 775 CRISPR screens"/>
</dbReference>
<dbReference type="GeneWiki" id="SLC10A3"/>
<dbReference type="GenomeRNAi" id="8273"/>
<dbReference type="Pharos" id="P09131">
    <property type="development level" value="Tbio"/>
</dbReference>
<dbReference type="PRO" id="PR:P09131"/>
<dbReference type="Proteomes" id="UP000005640">
    <property type="component" value="Chromosome X"/>
</dbReference>
<dbReference type="RNAct" id="P09131">
    <property type="molecule type" value="protein"/>
</dbReference>
<dbReference type="Bgee" id="ENSG00000126903">
    <property type="expression patterns" value="Expressed in right coronary artery and 146 other cell types or tissues"/>
</dbReference>
<dbReference type="ExpressionAtlas" id="P09131">
    <property type="expression patterns" value="baseline and differential"/>
</dbReference>
<dbReference type="GO" id="GO:0016020">
    <property type="term" value="C:membrane"/>
    <property type="evidence" value="ECO:0007669"/>
    <property type="project" value="UniProtKB-SubCell"/>
</dbReference>
<dbReference type="GO" id="GO:0008508">
    <property type="term" value="F:bile acid:sodium symporter activity"/>
    <property type="evidence" value="ECO:0000318"/>
    <property type="project" value="GO_Central"/>
</dbReference>
<dbReference type="GO" id="GO:0015721">
    <property type="term" value="P:bile acid and bile salt transport"/>
    <property type="evidence" value="ECO:0000318"/>
    <property type="project" value="GO_Central"/>
</dbReference>
<dbReference type="GO" id="GO:0032526">
    <property type="term" value="P:response to retinoic acid"/>
    <property type="evidence" value="ECO:0007669"/>
    <property type="project" value="Ensembl"/>
</dbReference>
<dbReference type="FunFam" id="1.20.1530.20:FF:000014">
    <property type="entry name" value="Solute carrier family 10 member 3"/>
    <property type="match status" value="1"/>
</dbReference>
<dbReference type="Gene3D" id="1.20.1530.20">
    <property type="match status" value="1"/>
</dbReference>
<dbReference type="InterPro" id="IPR002657">
    <property type="entry name" value="BilAc:Na_symport/Acr3"/>
</dbReference>
<dbReference type="InterPro" id="IPR004710">
    <property type="entry name" value="Bilac:Na_transpt"/>
</dbReference>
<dbReference type="InterPro" id="IPR038770">
    <property type="entry name" value="Na+/solute_symporter_sf"/>
</dbReference>
<dbReference type="NCBIfam" id="TIGR00841">
    <property type="entry name" value="bass"/>
    <property type="match status" value="1"/>
</dbReference>
<dbReference type="PANTHER" id="PTHR10361:SF3">
    <property type="entry name" value="P3 PROTEIN"/>
    <property type="match status" value="1"/>
</dbReference>
<dbReference type="PANTHER" id="PTHR10361">
    <property type="entry name" value="SODIUM-BILE ACID COTRANSPORTER"/>
    <property type="match status" value="1"/>
</dbReference>
<dbReference type="Pfam" id="PF24690">
    <property type="entry name" value="NTCP5_P3_N"/>
    <property type="match status" value="1"/>
</dbReference>
<dbReference type="Pfam" id="PF01758">
    <property type="entry name" value="SBF"/>
    <property type="match status" value="1"/>
</dbReference>
<name>P3_HUMAN</name>
<sequence length="477" mass="50333">MVLMQDKGSSQQWPGLGGEGGGTGPLSMLRAALLLISLPWGAQGTASTSLSTAGGHTVPPTGGRYLSIGDGSVMEFEFPEDSEGIIVISSQYPGQANRTAPGPMLRVTSLDTEVLTIKNVSAITWGGGGGFVVSIHSGLAGLAPLHIQLVDAHEAPPTLIEERRDFCIKVSPAEDTPATLSADLAHFSENPILYLLLPLIFVNKCSFGCKVELEVLKGLMQSPQPMLLGLLGQFLVMPLYAFLMAKVFMLPKALALGLIITCSSPGGGGSYLFSLLLGGDVTLAISMTFLSTVAATGFLPLSSAIYSRLLSIHETLHVPISKILGTLLFIAIPIAVGVLIKSKLPKFSQLLLQVVKPFSFVLLLGGLFLAYRMGVFILAGIRLPIVLVGITVPLVGLLVGYCLATCLKLPVAQRRTVSIEVGVQNSLLALAMLQLSLRRLQADYASQAPFIVALSGTSEMLALVIGHFIYSSLFPVP</sequence>